<feature type="chain" id="PRO_0000075474" description="Insertion sequence IS21 putative ATP-binding protein">
    <location>
        <begin position="1"/>
        <end position="265"/>
    </location>
</feature>
<feature type="binding site" evidence="1">
    <location>
        <begin position="104"/>
        <end position="111"/>
    </location>
    <ligand>
        <name>ATP</name>
        <dbReference type="ChEBI" id="CHEBI:30616"/>
    </ligand>
</feature>
<geneLocation type="plasmid">
    <name>R68.45</name>
</geneLocation>
<evidence type="ECO:0000255" key="1"/>
<evidence type="ECO:0000305" key="2"/>
<name>ISTB_PSEAI</name>
<gene>
    <name type="primary">istB</name>
</gene>
<dbReference type="EMBL" id="X14793">
    <property type="protein sequence ID" value="CAA32899.2"/>
    <property type="molecule type" value="Genomic_DNA"/>
</dbReference>
<dbReference type="PIR" id="JV0013">
    <property type="entry name" value="BVECIT"/>
</dbReference>
<dbReference type="RefSeq" id="WP_000544830.1">
    <property type="nucleotide sequence ID" value="NZ_PP591960.1"/>
</dbReference>
<dbReference type="RefSeq" id="YP_758698.1">
    <property type="nucleotide sequence ID" value="NC_008357.1"/>
</dbReference>
<dbReference type="SMR" id="P15026"/>
<dbReference type="GeneID" id="66562714"/>
<dbReference type="GO" id="GO:0005524">
    <property type="term" value="F:ATP binding"/>
    <property type="evidence" value="ECO:0007669"/>
    <property type="project" value="UniProtKB-KW"/>
</dbReference>
<dbReference type="GO" id="GO:0016887">
    <property type="term" value="F:ATP hydrolysis activity"/>
    <property type="evidence" value="ECO:0007669"/>
    <property type="project" value="InterPro"/>
</dbReference>
<dbReference type="GO" id="GO:0006260">
    <property type="term" value="P:DNA replication"/>
    <property type="evidence" value="ECO:0007669"/>
    <property type="project" value="TreeGrafter"/>
</dbReference>
<dbReference type="CDD" id="cd00009">
    <property type="entry name" value="AAA"/>
    <property type="match status" value="1"/>
</dbReference>
<dbReference type="Gene3D" id="3.40.50.300">
    <property type="entry name" value="P-loop containing nucleotide triphosphate hydrolases"/>
    <property type="match status" value="1"/>
</dbReference>
<dbReference type="InterPro" id="IPR003593">
    <property type="entry name" value="AAA+_ATPase"/>
</dbReference>
<dbReference type="InterPro" id="IPR001270">
    <property type="entry name" value="ClpA/B"/>
</dbReference>
<dbReference type="InterPro" id="IPR028350">
    <property type="entry name" value="DNAC/IstB-like"/>
</dbReference>
<dbReference type="InterPro" id="IPR047661">
    <property type="entry name" value="IstB"/>
</dbReference>
<dbReference type="InterPro" id="IPR002611">
    <property type="entry name" value="IstB_ATP-bd"/>
</dbReference>
<dbReference type="InterPro" id="IPR027417">
    <property type="entry name" value="P-loop_NTPase"/>
</dbReference>
<dbReference type="NCBIfam" id="NF038214">
    <property type="entry name" value="IS21_help_AAA"/>
    <property type="match status" value="1"/>
</dbReference>
<dbReference type="PANTHER" id="PTHR30050:SF4">
    <property type="entry name" value="ATP-BINDING PROTEIN RV3427C IN INSERTION SEQUENCE-RELATED"/>
    <property type="match status" value="1"/>
</dbReference>
<dbReference type="PANTHER" id="PTHR30050">
    <property type="entry name" value="CHROMOSOMAL REPLICATION INITIATOR PROTEIN DNAA"/>
    <property type="match status" value="1"/>
</dbReference>
<dbReference type="Pfam" id="PF01695">
    <property type="entry name" value="IstB_IS21"/>
    <property type="match status" value="1"/>
</dbReference>
<dbReference type="PIRSF" id="PIRSF003073">
    <property type="entry name" value="DNAC_TnpB_IstB"/>
    <property type="match status" value="1"/>
</dbReference>
<dbReference type="PRINTS" id="PR00300">
    <property type="entry name" value="CLPPROTEASEA"/>
</dbReference>
<dbReference type="SMART" id="SM00382">
    <property type="entry name" value="AAA"/>
    <property type="match status" value="1"/>
</dbReference>
<dbReference type="SUPFAM" id="SSF52540">
    <property type="entry name" value="P-loop containing nucleoside triphosphate hydrolases"/>
    <property type="match status" value="1"/>
</dbReference>
<organism>
    <name type="scientific">Pseudomonas aeruginosa</name>
    <dbReference type="NCBI Taxonomy" id="287"/>
    <lineage>
        <taxon>Bacteria</taxon>
        <taxon>Pseudomonadati</taxon>
        <taxon>Pseudomonadota</taxon>
        <taxon>Gammaproteobacteria</taxon>
        <taxon>Pseudomonadales</taxon>
        <taxon>Pseudomonadaceae</taxon>
        <taxon>Pseudomonas</taxon>
    </lineage>
</organism>
<accession>P15026</accession>
<comment type="function">
    <text>One of two proteins expressed only when there is a tandem repeat of the IS21 insertion sequence, it is necessary for the transposition of plasmids with that tandem repeat.</text>
</comment>
<comment type="similarity">
    <text evidence="2">Belongs to the IS21/IS1162 putative ATP-binding protein family.</text>
</comment>
<sequence>MHELEVLLSRLKMEHLSYHVESLLEQAAKKELNYREFLCMALQQEWNGRHQRGMESRLKQARLPWVKTLEQFDFTFQPGIDRKVVRELAGLAFVERSENVILLGPPGVGKTHLAIALGVKAVDAGHRVLFMPLDRLIATLMKAKQENRLERQLQQLSYARVLILDEIGYLPMNREEASLFFRLLNRRYEKASIILTSNKGFADWGEMFGDHVLATAILDRLLHHSTTLNIKGESYRLKEKRKAGVLTKNTTPISDDEMVKSGQHQ</sequence>
<reference key="1">
    <citation type="journal article" date="1989" name="Mol. Gen. Genet.">
        <title>Genetic structure, function and regulation of the transposable element IS21.</title>
        <authorList>
            <person name="Reimmann C."/>
            <person name="Moore R."/>
            <person name="Little S."/>
            <person name="Savioz A."/>
            <person name="Willetts N.S."/>
            <person name="Haas D."/>
        </authorList>
    </citation>
    <scope>NUCLEOTIDE SEQUENCE [GENOMIC DNA]</scope>
</reference>
<reference key="2">
    <citation type="submission" date="2000-06" db="EMBL/GenBank/DDBJ databases">
        <authorList>
            <person name="Berger B."/>
        </authorList>
    </citation>
    <scope>SEQUENCE REVISION TO 283</scope>
</reference>
<protein>
    <recommendedName>
        <fullName>Insertion sequence IS21 putative ATP-binding protein</fullName>
    </recommendedName>
</protein>
<keyword id="KW-0067">ATP-binding</keyword>
<keyword id="KW-0547">Nucleotide-binding</keyword>
<keyword id="KW-0614">Plasmid</keyword>
<keyword id="KW-0814">Transposable element</keyword>
<proteinExistence type="inferred from homology"/>